<protein>
    <recommendedName>
        <fullName>Alpha-defensin 10</fullName>
    </recommendedName>
    <alternativeName>
        <fullName>Defensin-related cryptdin-10</fullName>
    </alternativeName>
</protein>
<comment type="function">
    <text>Probably contributes to the antimicrobial barrier function of the small bowel mucosa.</text>
</comment>
<comment type="subcellular location">
    <subcellularLocation>
        <location>Secreted</location>
    </subcellularLocation>
</comment>
<comment type="tissue specificity">
    <text>Paneth cells of the small bowel.</text>
</comment>
<comment type="similarity">
    <text evidence="4">Belongs to the alpha-defensin family.</text>
</comment>
<proteinExistence type="evidence at transcript level"/>
<organism>
    <name type="scientific">Mus musculus</name>
    <name type="common">Mouse</name>
    <dbReference type="NCBI Taxonomy" id="10090"/>
    <lineage>
        <taxon>Eukaryota</taxon>
        <taxon>Metazoa</taxon>
        <taxon>Chordata</taxon>
        <taxon>Craniata</taxon>
        <taxon>Vertebrata</taxon>
        <taxon>Euteleostomi</taxon>
        <taxon>Mammalia</taxon>
        <taxon>Eutheria</taxon>
        <taxon>Euarchontoglires</taxon>
        <taxon>Glires</taxon>
        <taxon>Rodentia</taxon>
        <taxon>Myomorpha</taxon>
        <taxon>Muroidea</taxon>
        <taxon>Muridae</taxon>
        <taxon>Murinae</taxon>
        <taxon>Mus</taxon>
        <taxon>Mus</taxon>
    </lineage>
</organism>
<keyword id="KW-0044">Antibiotic</keyword>
<keyword id="KW-0929">Antimicrobial</keyword>
<keyword id="KW-0211">Defensin</keyword>
<keyword id="KW-1015">Disulfide bond</keyword>
<keyword id="KW-1185">Reference proteome</keyword>
<keyword id="KW-0964">Secreted</keyword>
<keyword id="KW-0732">Signal</keyword>
<feature type="signal peptide" evidence="2">
    <location>
        <begin position="1"/>
        <end position="19"/>
    </location>
</feature>
<feature type="propeptide" id="PRO_0000006835" evidence="1">
    <location>
        <begin position="20"/>
        <end position="58"/>
    </location>
</feature>
<feature type="peptide" id="PRO_0000006836" description="Alpha-defensin 10">
    <location>
        <begin position="59"/>
        <end position="93"/>
    </location>
</feature>
<feature type="region of interest" description="Disordered" evidence="3">
    <location>
        <begin position="22"/>
        <end position="56"/>
    </location>
</feature>
<feature type="disulfide bond" evidence="1">
    <location>
        <begin position="64"/>
        <end position="92"/>
    </location>
</feature>
<feature type="disulfide bond" evidence="1">
    <location>
        <begin position="66"/>
        <end position="81"/>
    </location>
</feature>
<feature type="disulfide bond" evidence="1">
    <location>
        <begin position="71"/>
        <end position="91"/>
    </location>
</feature>
<name>DFA10_MOUSE</name>
<gene>
    <name type="primary">Defa10</name>
    <name type="synonym">Defcr10</name>
</gene>
<dbReference type="EMBL" id="U03061">
    <property type="protein sequence ID" value="AAA57178.1"/>
    <property type="molecule type" value="mRNA"/>
</dbReference>
<dbReference type="PIR" id="I48893">
    <property type="entry name" value="I48893"/>
</dbReference>
<dbReference type="SMR" id="P50708"/>
<dbReference type="FunCoup" id="P50708">
    <property type="interactions" value="42"/>
</dbReference>
<dbReference type="TCDB" id="1.C.19.1.4">
    <property type="family name" value="the defensin (defensin) family"/>
</dbReference>
<dbReference type="PeptideAtlas" id="P50708"/>
<dbReference type="AGR" id="MGI:99591"/>
<dbReference type="MGI" id="MGI:99591">
    <property type="gene designation" value="Defa10"/>
</dbReference>
<dbReference type="InParanoid" id="P50708"/>
<dbReference type="PRO" id="PR:P50708"/>
<dbReference type="Proteomes" id="UP000000589">
    <property type="component" value="Unplaced"/>
</dbReference>
<dbReference type="RNAct" id="P50708">
    <property type="molecule type" value="protein"/>
</dbReference>
<dbReference type="GO" id="GO:0005615">
    <property type="term" value="C:extracellular space"/>
    <property type="evidence" value="ECO:0007669"/>
    <property type="project" value="InterPro"/>
</dbReference>
<dbReference type="GO" id="GO:0042742">
    <property type="term" value="P:defense response to bacterium"/>
    <property type="evidence" value="ECO:0007669"/>
    <property type="project" value="UniProtKB-KW"/>
</dbReference>
<dbReference type="InterPro" id="IPR016327">
    <property type="entry name" value="Alpha-defensin"/>
</dbReference>
<dbReference type="InterPro" id="IPR006081">
    <property type="entry name" value="Alpha-defensin_C"/>
</dbReference>
<dbReference type="InterPro" id="IPR002366">
    <property type="entry name" value="Alpha-defensin_N"/>
</dbReference>
<dbReference type="InterPro" id="IPR006080">
    <property type="entry name" value="Beta/alpha-defensin_C"/>
</dbReference>
<dbReference type="PANTHER" id="PTHR11876">
    <property type="entry name" value="ALPHA-DEFENSIN 1"/>
    <property type="match status" value="1"/>
</dbReference>
<dbReference type="PANTHER" id="PTHR11876:SF2">
    <property type="entry name" value="ALPHA-DEFENSIN 1-RELATED"/>
    <property type="match status" value="1"/>
</dbReference>
<dbReference type="Pfam" id="PF00323">
    <property type="entry name" value="Defensin_1"/>
    <property type="match status" value="1"/>
</dbReference>
<dbReference type="Pfam" id="PF00879">
    <property type="entry name" value="Defensin_propep"/>
    <property type="match status" value="1"/>
</dbReference>
<dbReference type="PIRSF" id="PIRSF001875">
    <property type="entry name" value="Alpha-defensin"/>
    <property type="match status" value="1"/>
</dbReference>
<dbReference type="SMART" id="SM01418">
    <property type="entry name" value="Defensin_propep"/>
    <property type="match status" value="1"/>
</dbReference>
<dbReference type="SMART" id="SM00048">
    <property type="entry name" value="DEFSN"/>
    <property type="match status" value="1"/>
</dbReference>
<dbReference type="SUPFAM" id="SSF57392">
    <property type="entry name" value="Defensin-like"/>
    <property type="match status" value="1"/>
</dbReference>
<dbReference type="PROSITE" id="PS00269">
    <property type="entry name" value="DEFENSIN"/>
    <property type="match status" value="1"/>
</dbReference>
<accession>P50708</accession>
<evidence type="ECO:0000250" key="1"/>
<evidence type="ECO:0000255" key="2"/>
<evidence type="ECO:0000256" key="3">
    <source>
        <dbReference type="SAM" id="MobiDB-lite"/>
    </source>
</evidence>
<evidence type="ECO:0000305" key="4"/>
<sequence length="93" mass="10429">MKTLVLLSALVLLAFQVQADPIQNTDEETKTEEQPGEDDQAVSVSFGDPEGSSLQEESLRDLVCYCRKRGCKGRERMNGTCRKGHLLYTMCCR</sequence>
<reference key="1">
    <citation type="journal article" date="1994" name="Infect. Immun.">
        <title>Mouse Paneth cell defensins: primary structures and antibacterial activities of numerous cryptdin isoforms.</title>
        <authorList>
            <person name="Ouellette A.J."/>
            <person name="Hsieh M.M."/>
            <person name="Nosek M.T."/>
            <person name="Cano-Gauci D.F."/>
            <person name="Huttner K.M."/>
            <person name="Buick R.N."/>
            <person name="Selsted M.E."/>
        </authorList>
    </citation>
    <scope>NUCLEOTIDE SEQUENCE [MRNA] OF 2-93</scope>
    <source>
        <strain>CD-1</strain>
        <tissue>Intestinal crypt</tissue>
    </source>
</reference>
<reference key="2">
    <citation type="journal article" date="1994" name="Genomics">
        <title>Structure and diversity of the murine cryptdin gene family.</title>
        <authorList>
            <person name="Huttner K.M."/>
            <person name="Selsted M.E."/>
            <person name="Ouellette A.J."/>
        </authorList>
    </citation>
    <scope>NUCLEOTIDE SEQUENCE [MRNA] OF 59-93</scope>
    <source>
        <strain>129/SvJ</strain>
        <strain>C3H/HeJ</strain>
        <tissue>Small intestine</tissue>
    </source>
</reference>